<comment type="similarity">
    <text evidence="1">Belongs to the universal ribosomal protein uS2 family.</text>
</comment>
<name>RS2_SALG2</name>
<keyword id="KW-0687">Ribonucleoprotein</keyword>
<keyword id="KW-0689">Ribosomal protein</keyword>
<sequence length="241" mass="26759">MATVSMRDMLKAGVHFGHQTRYWNPKMKPFIFGARNKVHIINLEKTVPMFNEALAELNKISARKGKILFVGTKRAASEAVKEAANSCDQFFVNHRWLGGMLTNWKTVRQSIKRLKDLETQSQDGTFEKLTKKEALMRTRELEKLENSLGGIKDMGGLPDALFVIDADHEHIAIKEANNLGIPVFAIVDTNSDPDGVDFVIPGNDDAIRAVSLYLGAVAATVREGRSQDLASQAEESFVEAE</sequence>
<feature type="chain" id="PRO_1000115053" description="Small ribosomal subunit protein uS2">
    <location>
        <begin position="1"/>
        <end position="241"/>
    </location>
</feature>
<dbReference type="EMBL" id="AM933173">
    <property type="protein sequence ID" value="CAR36127.1"/>
    <property type="molecule type" value="Genomic_DNA"/>
</dbReference>
<dbReference type="RefSeq" id="WP_000246886.1">
    <property type="nucleotide sequence ID" value="NC_011274.1"/>
</dbReference>
<dbReference type="SMR" id="B5RHF4"/>
<dbReference type="KEGG" id="seg:SG0220"/>
<dbReference type="HOGENOM" id="CLU_040318_1_0_6"/>
<dbReference type="Proteomes" id="UP000008321">
    <property type="component" value="Chromosome"/>
</dbReference>
<dbReference type="GO" id="GO:0022627">
    <property type="term" value="C:cytosolic small ribosomal subunit"/>
    <property type="evidence" value="ECO:0007669"/>
    <property type="project" value="TreeGrafter"/>
</dbReference>
<dbReference type="GO" id="GO:0003735">
    <property type="term" value="F:structural constituent of ribosome"/>
    <property type="evidence" value="ECO:0007669"/>
    <property type="project" value="InterPro"/>
</dbReference>
<dbReference type="GO" id="GO:0006412">
    <property type="term" value="P:translation"/>
    <property type="evidence" value="ECO:0007669"/>
    <property type="project" value="UniProtKB-UniRule"/>
</dbReference>
<dbReference type="CDD" id="cd01425">
    <property type="entry name" value="RPS2"/>
    <property type="match status" value="1"/>
</dbReference>
<dbReference type="FunFam" id="1.10.287.610:FF:000001">
    <property type="entry name" value="30S ribosomal protein S2"/>
    <property type="match status" value="1"/>
</dbReference>
<dbReference type="Gene3D" id="3.40.50.10490">
    <property type="entry name" value="Glucose-6-phosphate isomerase like protein, domain 1"/>
    <property type="match status" value="1"/>
</dbReference>
<dbReference type="Gene3D" id="1.10.287.610">
    <property type="entry name" value="Helix hairpin bin"/>
    <property type="match status" value="1"/>
</dbReference>
<dbReference type="HAMAP" id="MF_00291_B">
    <property type="entry name" value="Ribosomal_uS2_B"/>
    <property type="match status" value="1"/>
</dbReference>
<dbReference type="InterPro" id="IPR001865">
    <property type="entry name" value="Ribosomal_uS2"/>
</dbReference>
<dbReference type="InterPro" id="IPR005706">
    <property type="entry name" value="Ribosomal_uS2_bac/mit/plastid"/>
</dbReference>
<dbReference type="InterPro" id="IPR018130">
    <property type="entry name" value="Ribosomal_uS2_CS"/>
</dbReference>
<dbReference type="InterPro" id="IPR023591">
    <property type="entry name" value="Ribosomal_uS2_flav_dom_sf"/>
</dbReference>
<dbReference type="NCBIfam" id="TIGR01011">
    <property type="entry name" value="rpsB_bact"/>
    <property type="match status" value="1"/>
</dbReference>
<dbReference type="PANTHER" id="PTHR12534">
    <property type="entry name" value="30S RIBOSOMAL PROTEIN S2 PROKARYOTIC AND ORGANELLAR"/>
    <property type="match status" value="1"/>
</dbReference>
<dbReference type="PANTHER" id="PTHR12534:SF0">
    <property type="entry name" value="SMALL RIBOSOMAL SUBUNIT PROTEIN US2M"/>
    <property type="match status" value="1"/>
</dbReference>
<dbReference type="Pfam" id="PF00318">
    <property type="entry name" value="Ribosomal_S2"/>
    <property type="match status" value="1"/>
</dbReference>
<dbReference type="PRINTS" id="PR00395">
    <property type="entry name" value="RIBOSOMALS2"/>
</dbReference>
<dbReference type="SUPFAM" id="SSF52313">
    <property type="entry name" value="Ribosomal protein S2"/>
    <property type="match status" value="1"/>
</dbReference>
<dbReference type="PROSITE" id="PS00962">
    <property type="entry name" value="RIBOSOMAL_S2_1"/>
    <property type="match status" value="1"/>
</dbReference>
<dbReference type="PROSITE" id="PS00963">
    <property type="entry name" value="RIBOSOMAL_S2_2"/>
    <property type="match status" value="1"/>
</dbReference>
<proteinExistence type="inferred from homology"/>
<accession>B5RHF4</accession>
<organism>
    <name type="scientific">Salmonella gallinarum (strain 287/91 / NCTC 13346)</name>
    <dbReference type="NCBI Taxonomy" id="550538"/>
    <lineage>
        <taxon>Bacteria</taxon>
        <taxon>Pseudomonadati</taxon>
        <taxon>Pseudomonadota</taxon>
        <taxon>Gammaproteobacteria</taxon>
        <taxon>Enterobacterales</taxon>
        <taxon>Enterobacteriaceae</taxon>
        <taxon>Salmonella</taxon>
    </lineage>
</organism>
<evidence type="ECO:0000255" key="1">
    <source>
        <dbReference type="HAMAP-Rule" id="MF_00291"/>
    </source>
</evidence>
<evidence type="ECO:0000305" key="2"/>
<reference key="1">
    <citation type="journal article" date="2008" name="Genome Res.">
        <title>Comparative genome analysis of Salmonella enteritidis PT4 and Salmonella gallinarum 287/91 provides insights into evolutionary and host adaptation pathways.</title>
        <authorList>
            <person name="Thomson N.R."/>
            <person name="Clayton D.J."/>
            <person name="Windhorst D."/>
            <person name="Vernikos G."/>
            <person name="Davidson S."/>
            <person name="Churcher C."/>
            <person name="Quail M.A."/>
            <person name="Stevens M."/>
            <person name="Jones M.A."/>
            <person name="Watson M."/>
            <person name="Barron A."/>
            <person name="Layton A."/>
            <person name="Pickard D."/>
            <person name="Kingsley R.A."/>
            <person name="Bignell A."/>
            <person name="Clark L."/>
            <person name="Harris B."/>
            <person name="Ormond D."/>
            <person name="Abdellah Z."/>
            <person name="Brooks K."/>
            <person name="Cherevach I."/>
            <person name="Chillingworth T."/>
            <person name="Woodward J."/>
            <person name="Norberczak H."/>
            <person name="Lord A."/>
            <person name="Arrowsmith C."/>
            <person name="Jagels K."/>
            <person name="Moule S."/>
            <person name="Mungall K."/>
            <person name="Saunders M."/>
            <person name="Whitehead S."/>
            <person name="Chabalgoity J.A."/>
            <person name="Maskell D."/>
            <person name="Humphreys T."/>
            <person name="Roberts M."/>
            <person name="Barrow P.A."/>
            <person name="Dougan G."/>
            <person name="Parkhill J."/>
        </authorList>
    </citation>
    <scope>NUCLEOTIDE SEQUENCE [LARGE SCALE GENOMIC DNA]</scope>
    <source>
        <strain>287/91 / NCTC 13346</strain>
    </source>
</reference>
<gene>
    <name evidence="1" type="primary">rpsB</name>
    <name type="ordered locus">SG0220</name>
</gene>
<protein>
    <recommendedName>
        <fullName evidence="1">Small ribosomal subunit protein uS2</fullName>
    </recommendedName>
    <alternativeName>
        <fullName evidence="2">30S ribosomal protein S2</fullName>
    </alternativeName>
</protein>